<name>AROA_METJA</name>
<reference key="1">
    <citation type="journal article" date="1996" name="Science">
        <title>Complete genome sequence of the methanogenic archaeon, Methanococcus jannaschii.</title>
        <authorList>
            <person name="Bult C.J."/>
            <person name="White O."/>
            <person name="Olsen G.J."/>
            <person name="Zhou L."/>
            <person name="Fleischmann R.D."/>
            <person name="Sutton G.G."/>
            <person name="Blake J.A."/>
            <person name="FitzGerald L.M."/>
            <person name="Clayton R.A."/>
            <person name="Gocayne J.D."/>
            <person name="Kerlavage A.R."/>
            <person name="Dougherty B.A."/>
            <person name="Tomb J.-F."/>
            <person name="Adams M.D."/>
            <person name="Reich C.I."/>
            <person name="Overbeek R."/>
            <person name="Kirkness E.F."/>
            <person name="Weinstock K.G."/>
            <person name="Merrick J.M."/>
            <person name="Glodek A."/>
            <person name="Scott J.L."/>
            <person name="Geoghagen N.S.M."/>
            <person name="Weidman J.F."/>
            <person name="Fuhrmann J.L."/>
            <person name="Nguyen D."/>
            <person name="Utterback T.R."/>
            <person name="Kelley J.M."/>
            <person name="Peterson J.D."/>
            <person name="Sadow P.W."/>
            <person name="Hanna M.C."/>
            <person name="Cotton M.D."/>
            <person name="Roberts K.M."/>
            <person name="Hurst M.A."/>
            <person name="Kaine B.P."/>
            <person name="Borodovsky M."/>
            <person name="Klenk H.-P."/>
            <person name="Fraser C.M."/>
            <person name="Smith H.O."/>
            <person name="Woese C.R."/>
            <person name="Venter J.C."/>
        </authorList>
    </citation>
    <scope>NUCLEOTIDE SEQUENCE [LARGE SCALE GENOMIC DNA]</scope>
    <source>
        <strain>ATCC 43067 / DSM 2661 / JAL-1 / JCM 10045 / NBRC 100440</strain>
    </source>
</reference>
<feature type="chain" id="PRO_0000088329" description="3-phosphoshikimate 1-carboxyvinyltransferase">
    <location>
        <begin position="1"/>
        <end position="429"/>
    </location>
</feature>
<feature type="active site" description="Proton acceptor" evidence="1">
    <location>
        <position position="311"/>
    </location>
</feature>
<feature type="binding site" evidence="1">
    <location>
        <position position="22"/>
    </location>
    <ligand>
        <name>3-phosphoshikimate</name>
        <dbReference type="ChEBI" id="CHEBI:145989"/>
    </ligand>
</feature>
<feature type="binding site" evidence="1">
    <location>
        <position position="22"/>
    </location>
    <ligand>
        <name>phosphoenolpyruvate</name>
        <dbReference type="ChEBI" id="CHEBI:58702"/>
    </ligand>
</feature>
<feature type="binding site" evidence="1">
    <location>
        <position position="23"/>
    </location>
    <ligand>
        <name>3-phosphoshikimate</name>
        <dbReference type="ChEBI" id="CHEBI:145989"/>
    </ligand>
</feature>
<feature type="binding site" evidence="1">
    <location>
        <position position="27"/>
    </location>
    <ligand>
        <name>3-phosphoshikimate</name>
        <dbReference type="ChEBI" id="CHEBI:145989"/>
    </ligand>
</feature>
<feature type="binding site" evidence="1">
    <location>
        <position position="93"/>
    </location>
    <ligand>
        <name>phosphoenolpyruvate</name>
        <dbReference type="ChEBI" id="CHEBI:58702"/>
    </ligand>
</feature>
<feature type="binding site" evidence="1">
    <location>
        <position position="122"/>
    </location>
    <ligand>
        <name>phosphoenolpyruvate</name>
        <dbReference type="ChEBI" id="CHEBI:58702"/>
    </ligand>
</feature>
<feature type="binding site" evidence="1">
    <location>
        <position position="168"/>
    </location>
    <ligand>
        <name>3-phosphoshikimate</name>
        <dbReference type="ChEBI" id="CHEBI:145989"/>
    </ligand>
</feature>
<feature type="binding site" evidence="1">
    <location>
        <position position="169"/>
    </location>
    <ligand>
        <name>3-phosphoshikimate</name>
        <dbReference type="ChEBI" id="CHEBI:145989"/>
    </ligand>
</feature>
<feature type="binding site" evidence="1">
    <location>
        <position position="170"/>
    </location>
    <ligand>
        <name>3-phosphoshikimate</name>
        <dbReference type="ChEBI" id="CHEBI:145989"/>
    </ligand>
</feature>
<feature type="binding site" evidence="1">
    <location>
        <position position="170"/>
    </location>
    <ligand>
        <name>phosphoenolpyruvate</name>
        <dbReference type="ChEBI" id="CHEBI:58702"/>
    </ligand>
</feature>
<feature type="binding site" evidence="1">
    <location>
        <position position="196"/>
    </location>
    <ligand>
        <name>3-phosphoshikimate</name>
        <dbReference type="ChEBI" id="CHEBI:145989"/>
    </ligand>
</feature>
<feature type="binding site" evidence="1">
    <location>
        <position position="311"/>
    </location>
    <ligand>
        <name>3-phosphoshikimate</name>
        <dbReference type="ChEBI" id="CHEBI:145989"/>
    </ligand>
</feature>
<feature type="binding site" evidence="1">
    <location>
        <position position="338"/>
    </location>
    <ligand>
        <name>3-phosphoshikimate</name>
        <dbReference type="ChEBI" id="CHEBI:145989"/>
    </ligand>
</feature>
<feature type="binding site" evidence="1">
    <location>
        <position position="342"/>
    </location>
    <ligand>
        <name>phosphoenolpyruvate</name>
        <dbReference type="ChEBI" id="CHEBI:58702"/>
    </ligand>
</feature>
<feature type="binding site" evidence="1">
    <location>
        <position position="384"/>
    </location>
    <ligand>
        <name>phosphoenolpyruvate</name>
        <dbReference type="ChEBI" id="CHEBI:58702"/>
    </ligand>
</feature>
<protein>
    <recommendedName>
        <fullName evidence="1">3-phosphoshikimate 1-carboxyvinyltransferase</fullName>
        <ecNumber evidence="1">2.5.1.19</ecNumber>
    </recommendedName>
    <alternativeName>
        <fullName evidence="1">5-enolpyruvylshikimate-3-phosphate synthase</fullName>
        <shortName evidence="1">EPSP synthase</shortName>
        <shortName evidence="1">EPSPS</shortName>
    </alternativeName>
</protein>
<comment type="function">
    <text evidence="1">Catalyzes the transfer of the enolpyruvyl moiety of phosphoenolpyruvate (PEP) to the 5-hydroxyl of shikimate-3-phosphate (S3P) to produce enolpyruvyl shikimate-3-phosphate and inorganic phosphate.</text>
</comment>
<comment type="catalytic activity">
    <reaction evidence="1">
        <text>3-phosphoshikimate + phosphoenolpyruvate = 5-O-(1-carboxyvinyl)-3-phosphoshikimate + phosphate</text>
        <dbReference type="Rhea" id="RHEA:21256"/>
        <dbReference type="ChEBI" id="CHEBI:43474"/>
        <dbReference type="ChEBI" id="CHEBI:57701"/>
        <dbReference type="ChEBI" id="CHEBI:58702"/>
        <dbReference type="ChEBI" id="CHEBI:145989"/>
        <dbReference type="EC" id="2.5.1.19"/>
    </reaction>
    <physiologicalReaction direction="left-to-right" evidence="1">
        <dbReference type="Rhea" id="RHEA:21257"/>
    </physiologicalReaction>
</comment>
<comment type="pathway">
    <text evidence="1">Metabolic intermediate biosynthesis; chorismate biosynthesis.</text>
</comment>
<comment type="subunit">
    <text evidence="1">Monomer.</text>
</comment>
<comment type="subcellular location">
    <subcellularLocation>
        <location evidence="1">Cytoplasm</location>
    </subcellularLocation>
</comment>
<comment type="similarity">
    <text evidence="1 2">Belongs to the EPSP synthase family.</text>
</comment>
<evidence type="ECO:0000255" key="1">
    <source>
        <dbReference type="HAMAP-Rule" id="MF_00210"/>
    </source>
</evidence>
<evidence type="ECO:0000305" key="2"/>
<proteinExistence type="inferred from homology"/>
<accession>Q57925</accession>
<dbReference type="EC" id="2.5.1.19" evidence="1"/>
<dbReference type="EMBL" id="L77117">
    <property type="protein sequence ID" value="AAB98493.1"/>
    <property type="molecule type" value="Genomic_DNA"/>
</dbReference>
<dbReference type="SMR" id="Q57925"/>
<dbReference type="FunCoup" id="Q57925">
    <property type="interactions" value="153"/>
</dbReference>
<dbReference type="STRING" id="243232.MJ_0502"/>
<dbReference type="PaxDb" id="243232-MJ_0502"/>
<dbReference type="EnsemblBacteria" id="AAB98493">
    <property type="protein sequence ID" value="AAB98493"/>
    <property type="gene ID" value="MJ_0502"/>
</dbReference>
<dbReference type="KEGG" id="mja:MJ_0502"/>
<dbReference type="eggNOG" id="arCOG04134">
    <property type="taxonomic scope" value="Archaea"/>
</dbReference>
<dbReference type="HOGENOM" id="CLU_024321_0_0_2"/>
<dbReference type="InParanoid" id="Q57925"/>
<dbReference type="PhylomeDB" id="Q57925"/>
<dbReference type="UniPathway" id="UPA00053"/>
<dbReference type="Proteomes" id="UP000000805">
    <property type="component" value="Chromosome"/>
</dbReference>
<dbReference type="GO" id="GO:0005737">
    <property type="term" value="C:cytoplasm"/>
    <property type="evidence" value="ECO:0007669"/>
    <property type="project" value="UniProtKB-SubCell"/>
</dbReference>
<dbReference type="GO" id="GO:0003866">
    <property type="term" value="F:3-phosphoshikimate 1-carboxyvinyltransferase activity"/>
    <property type="evidence" value="ECO:0000318"/>
    <property type="project" value="GO_Central"/>
</dbReference>
<dbReference type="GO" id="GO:0008652">
    <property type="term" value="P:amino acid biosynthetic process"/>
    <property type="evidence" value="ECO:0007669"/>
    <property type="project" value="UniProtKB-KW"/>
</dbReference>
<dbReference type="GO" id="GO:0009073">
    <property type="term" value="P:aromatic amino acid family biosynthetic process"/>
    <property type="evidence" value="ECO:0007669"/>
    <property type="project" value="UniProtKB-KW"/>
</dbReference>
<dbReference type="GO" id="GO:0009423">
    <property type="term" value="P:chorismate biosynthetic process"/>
    <property type="evidence" value="ECO:0000318"/>
    <property type="project" value="GO_Central"/>
</dbReference>
<dbReference type="CDD" id="cd01556">
    <property type="entry name" value="EPSP_synthase"/>
    <property type="match status" value="1"/>
</dbReference>
<dbReference type="FunFam" id="3.65.10.10:FF:000021">
    <property type="entry name" value="3-phosphoshikimate 1-carboxyvinyltransferase"/>
    <property type="match status" value="1"/>
</dbReference>
<dbReference type="FunFam" id="3.65.10.10:FF:000012">
    <property type="entry name" value="Pentafunctional AROM polypeptide"/>
    <property type="match status" value="1"/>
</dbReference>
<dbReference type="Gene3D" id="3.65.10.10">
    <property type="entry name" value="Enolpyruvate transferase domain"/>
    <property type="match status" value="2"/>
</dbReference>
<dbReference type="HAMAP" id="MF_00210">
    <property type="entry name" value="EPSP_synth"/>
    <property type="match status" value="1"/>
</dbReference>
<dbReference type="InterPro" id="IPR001986">
    <property type="entry name" value="Enolpyruvate_Tfrase_dom"/>
</dbReference>
<dbReference type="InterPro" id="IPR036968">
    <property type="entry name" value="Enolpyruvate_Tfrase_sf"/>
</dbReference>
<dbReference type="InterPro" id="IPR006264">
    <property type="entry name" value="EPSP_synthase"/>
</dbReference>
<dbReference type="InterPro" id="IPR023193">
    <property type="entry name" value="EPSP_synthase_CS"/>
</dbReference>
<dbReference type="InterPro" id="IPR013792">
    <property type="entry name" value="RNA3'P_cycl/enolpyr_Trfase_a/b"/>
</dbReference>
<dbReference type="NCBIfam" id="TIGR01356">
    <property type="entry name" value="aroA"/>
    <property type="match status" value="1"/>
</dbReference>
<dbReference type="PANTHER" id="PTHR21090">
    <property type="entry name" value="AROM/DEHYDROQUINATE SYNTHASE"/>
    <property type="match status" value="1"/>
</dbReference>
<dbReference type="PANTHER" id="PTHR21090:SF5">
    <property type="entry name" value="PENTAFUNCTIONAL AROM POLYPEPTIDE"/>
    <property type="match status" value="1"/>
</dbReference>
<dbReference type="Pfam" id="PF00275">
    <property type="entry name" value="EPSP_synthase"/>
    <property type="match status" value="1"/>
</dbReference>
<dbReference type="PIRSF" id="PIRSF000505">
    <property type="entry name" value="EPSPS"/>
    <property type="match status" value="1"/>
</dbReference>
<dbReference type="SUPFAM" id="SSF55205">
    <property type="entry name" value="EPT/RTPC-like"/>
    <property type="match status" value="1"/>
</dbReference>
<dbReference type="PROSITE" id="PS00104">
    <property type="entry name" value="EPSP_SYNTHASE_1"/>
    <property type="match status" value="1"/>
</dbReference>
<dbReference type="PROSITE" id="PS00885">
    <property type="entry name" value="EPSP_SYNTHASE_2"/>
    <property type="match status" value="1"/>
</dbReference>
<keyword id="KW-0028">Amino-acid biosynthesis</keyword>
<keyword id="KW-0057">Aromatic amino acid biosynthesis</keyword>
<keyword id="KW-0963">Cytoplasm</keyword>
<keyword id="KW-1185">Reference proteome</keyword>
<keyword id="KW-0808">Transferase</keyword>
<gene>
    <name evidence="1" type="primary">aroA</name>
    <name type="ordered locus">MJ0502</name>
</gene>
<organism>
    <name type="scientific">Methanocaldococcus jannaschii (strain ATCC 43067 / DSM 2661 / JAL-1 / JCM 10045 / NBRC 100440)</name>
    <name type="common">Methanococcus jannaschii</name>
    <dbReference type="NCBI Taxonomy" id="243232"/>
    <lineage>
        <taxon>Archaea</taxon>
        <taxon>Methanobacteriati</taxon>
        <taxon>Methanobacteriota</taxon>
        <taxon>Methanomada group</taxon>
        <taxon>Methanococci</taxon>
        <taxon>Methanococcales</taxon>
        <taxon>Methanocaldococcaceae</taxon>
        <taxon>Methanocaldococcus</taxon>
    </lineage>
</organism>
<sequence length="429" mass="47009">MYLLIVKKTDRLEGIVKAPPSKSYTHRAVIGASLADGVSRIINPLWGADCLSSVHGCRMLGANIELDKEKDEWIVKGGELKTPDNIIDIGNSGTTLRILTSIASQIPKGYAILTGDDSIRKRPMQPLLDALKQLNIEAFSSKLDGTAPIIVKSGKIYGNVVKIRGDISSQFITSLMMLLPFNKEDTEIILTSPLKSKPYIDITLDILNKFGIKIDKTDNGFLVYGNQKYKPIDYIVEGDYSSASYLIAAGVLINSNITIENLFANSKQGDKAIINIVKEMGADIKVKKDKVIIEGEYSLKGIDVDVKDIPDLVPTIAVLGCFAEGKTEIYNGEHVRLKECDRLRACAVELKKMGADIEEKPDGLIIRGVKKLKGAKLNTYHDHRLVMAFTIAGLKAEGETIIEGEEAVKISFPNFVDVMKSLGANIEVK</sequence>